<feature type="chain" id="PRO_0000048982" description="Homeobox protein ceh-5">
    <location>
        <begin position="1"/>
        <end position="134"/>
    </location>
</feature>
<feature type="DNA-binding region" description="Homeobox" evidence="1">
    <location>
        <begin position="35"/>
        <end position="94"/>
    </location>
</feature>
<feature type="sequence conflict" description="In Ref. 2." evidence="2" ref="2">
    <original>VF</original>
    <variation>DN</variation>
    <location>
        <begin position="41"/>
        <end position="42"/>
    </location>
</feature>
<keyword id="KW-0217">Developmental protein</keyword>
<keyword id="KW-0238">DNA-binding</keyword>
<keyword id="KW-0371">Homeobox</keyword>
<keyword id="KW-0539">Nucleus</keyword>
<keyword id="KW-1185">Reference proteome</keyword>
<name>HM05_CAEEL</name>
<dbReference type="EMBL" id="Z81036">
    <property type="protein sequence ID" value="CAB02740.2"/>
    <property type="molecule type" value="Genomic_DNA"/>
</dbReference>
<dbReference type="PIR" id="S05706">
    <property type="entry name" value="S05706"/>
</dbReference>
<dbReference type="PIR" id="T19335">
    <property type="entry name" value="T19335"/>
</dbReference>
<dbReference type="RefSeq" id="NP_492586.2">
    <property type="nucleotide sequence ID" value="NM_060185.5"/>
</dbReference>
<dbReference type="SMR" id="P20269"/>
<dbReference type="STRING" id="6239.C16C2.1.1"/>
<dbReference type="PaxDb" id="6239-C16C2.1"/>
<dbReference type="EnsemblMetazoa" id="C16C2.1.1">
    <property type="protein sequence ID" value="C16C2.1.1"/>
    <property type="gene ID" value="WBGene00000430"/>
</dbReference>
<dbReference type="GeneID" id="191616"/>
<dbReference type="KEGG" id="cel:CELE_C16C2.1"/>
<dbReference type="UCSC" id="C16C2.1">
    <property type="organism name" value="c. elegans"/>
</dbReference>
<dbReference type="AGR" id="WB:WBGene00000430"/>
<dbReference type="CTD" id="191616"/>
<dbReference type="WormBase" id="C16C2.1">
    <property type="protein sequence ID" value="CE40300"/>
    <property type="gene ID" value="WBGene00000430"/>
    <property type="gene designation" value="ceh-5"/>
</dbReference>
<dbReference type="eggNOG" id="KOG0843">
    <property type="taxonomic scope" value="Eukaryota"/>
</dbReference>
<dbReference type="GeneTree" id="ENSGT00940000154361"/>
<dbReference type="HOGENOM" id="CLU_157463_0_0_1"/>
<dbReference type="InParanoid" id="P20269"/>
<dbReference type="OMA" id="RTLQFPM"/>
<dbReference type="OrthoDB" id="6159439at2759"/>
<dbReference type="PhylomeDB" id="P20269"/>
<dbReference type="PRO" id="PR:P20269"/>
<dbReference type="Proteomes" id="UP000001940">
    <property type="component" value="Chromosome I"/>
</dbReference>
<dbReference type="Bgee" id="WBGene00000430">
    <property type="expression patterns" value="Expressed in pharyngeal muscle cell (C elegans) and 3 other cell types or tissues"/>
</dbReference>
<dbReference type="GO" id="GO:0005634">
    <property type="term" value="C:nucleus"/>
    <property type="evidence" value="ECO:0000318"/>
    <property type="project" value="GO_Central"/>
</dbReference>
<dbReference type="GO" id="GO:0000981">
    <property type="term" value="F:DNA-binding transcription factor activity, RNA polymerase II-specific"/>
    <property type="evidence" value="ECO:0000318"/>
    <property type="project" value="GO_Central"/>
</dbReference>
<dbReference type="GO" id="GO:0000978">
    <property type="term" value="F:RNA polymerase II cis-regulatory region sequence-specific DNA binding"/>
    <property type="evidence" value="ECO:0000318"/>
    <property type="project" value="GO_Central"/>
</dbReference>
<dbReference type="GO" id="GO:0007420">
    <property type="term" value="P:brain development"/>
    <property type="evidence" value="ECO:0000318"/>
    <property type="project" value="GO_Central"/>
</dbReference>
<dbReference type="GO" id="GO:0007417">
    <property type="term" value="P:central nervous system development"/>
    <property type="evidence" value="ECO:0000318"/>
    <property type="project" value="GO_Central"/>
</dbReference>
<dbReference type="GO" id="GO:0030182">
    <property type="term" value="P:neuron differentiation"/>
    <property type="evidence" value="ECO:0000318"/>
    <property type="project" value="GO_Central"/>
</dbReference>
<dbReference type="GO" id="GO:0006357">
    <property type="term" value="P:regulation of transcription by RNA polymerase II"/>
    <property type="evidence" value="ECO:0000318"/>
    <property type="project" value="GO_Central"/>
</dbReference>
<dbReference type="CDD" id="cd00086">
    <property type="entry name" value="homeodomain"/>
    <property type="match status" value="1"/>
</dbReference>
<dbReference type="FunFam" id="1.10.10.60:FF:000553">
    <property type="entry name" value="Homeobox protein ceh-5"/>
    <property type="match status" value="1"/>
</dbReference>
<dbReference type="Gene3D" id="1.10.10.60">
    <property type="entry name" value="Homeodomain-like"/>
    <property type="match status" value="1"/>
</dbReference>
<dbReference type="InterPro" id="IPR001356">
    <property type="entry name" value="HD"/>
</dbReference>
<dbReference type="InterPro" id="IPR020479">
    <property type="entry name" value="HD_metazoa"/>
</dbReference>
<dbReference type="InterPro" id="IPR017970">
    <property type="entry name" value="Homeobox_CS"/>
</dbReference>
<dbReference type="InterPro" id="IPR050848">
    <property type="entry name" value="Homeobox_TF"/>
</dbReference>
<dbReference type="InterPro" id="IPR009057">
    <property type="entry name" value="Homeodomain-like_sf"/>
</dbReference>
<dbReference type="InterPro" id="IPR000047">
    <property type="entry name" value="HTH_motif"/>
</dbReference>
<dbReference type="PANTHER" id="PTHR24333">
    <property type="entry name" value="HOMEO BOX HB9 LIKE A-RELATED"/>
    <property type="match status" value="1"/>
</dbReference>
<dbReference type="PANTHER" id="PTHR24333:SF8">
    <property type="entry name" value="HOMEOBOX PROTEIN CEH-62"/>
    <property type="match status" value="1"/>
</dbReference>
<dbReference type="Pfam" id="PF00046">
    <property type="entry name" value="Homeodomain"/>
    <property type="match status" value="1"/>
</dbReference>
<dbReference type="PRINTS" id="PR00024">
    <property type="entry name" value="HOMEOBOX"/>
</dbReference>
<dbReference type="PRINTS" id="PR00031">
    <property type="entry name" value="HTHREPRESSR"/>
</dbReference>
<dbReference type="SMART" id="SM00389">
    <property type="entry name" value="HOX"/>
    <property type="match status" value="1"/>
</dbReference>
<dbReference type="SUPFAM" id="SSF46689">
    <property type="entry name" value="Homeodomain-like"/>
    <property type="match status" value="1"/>
</dbReference>
<dbReference type="PROSITE" id="PS00027">
    <property type="entry name" value="HOMEOBOX_1"/>
    <property type="match status" value="1"/>
</dbReference>
<dbReference type="PROSITE" id="PS50071">
    <property type="entry name" value="HOMEOBOX_2"/>
    <property type="match status" value="1"/>
</dbReference>
<evidence type="ECO:0000255" key="1">
    <source>
        <dbReference type="PROSITE-ProRule" id="PRU00108"/>
    </source>
</evidence>
<evidence type="ECO:0000305" key="2"/>
<reference key="1">
    <citation type="journal article" date="1998" name="Science">
        <title>Genome sequence of the nematode C. elegans: a platform for investigating biology.</title>
        <authorList>
            <consortium name="The C. elegans sequencing consortium"/>
        </authorList>
    </citation>
    <scope>NUCLEOTIDE SEQUENCE [LARGE SCALE GENOMIC DNA]</scope>
    <source>
        <strain>Bristol N2</strain>
    </source>
</reference>
<reference key="2">
    <citation type="journal article" date="1989" name="Nature">
        <title>Caenorhabditis elegans has scores of homoeobox-containing genes.</title>
        <authorList>
            <person name="Buerglin T.R."/>
            <person name="Finney M."/>
            <person name="Coulson A."/>
            <person name="Ruvkun G."/>
        </authorList>
    </citation>
    <scope>NUCLEOTIDE SEQUENCE [GENOMIC DNA] OF 35-94</scope>
    <source>
        <strain>Bristol N2</strain>
    </source>
</reference>
<organism>
    <name type="scientific">Caenorhabditis elegans</name>
    <dbReference type="NCBI Taxonomy" id="6239"/>
    <lineage>
        <taxon>Eukaryota</taxon>
        <taxon>Metazoa</taxon>
        <taxon>Ecdysozoa</taxon>
        <taxon>Nematoda</taxon>
        <taxon>Chromadorea</taxon>
        <taxon>Rhabditida</taxon>
        <taxon>Rhabditina</taxon>
        <taxon>Rhabditomorpha</taxon>
        <taxon>Rhabditoidea</taxon>
        <taxon>Rhabditidae</taxon>
        <taxon>Peloderinae</taxon>
        <taxon>Caenorhabditis</taxon>
    </lineage>
</organism>
<protein>
    <recommendedName>
        <fullName>Homeobox protein ceh-5</fullName>
    </recommendedName>
</protein>
<proteinExistence type="inferred from homology"/>
<accession>P20269</accession>
<accession>O17588</accession>
<sequence>MPSADTEFIRVIRIKSANGSEKMLEIPAKLDLERPKRPRTVFTDEQLEKLEESFNTSGYLSGSTRAKLAESLGLSDNQVKVWFQNRRTKQKKIDSRDPIKPETLKPAENYQNVYQNYQNYWTAAAFLSNNVISS</sequence>
<gene>
    <name type="primary">ceh-5</name>
    <name type="ORF">C16C2.1</name>
</gene>
<comment type="subcellular location">
    <subcellularLocation>
        <location evidence="1">Nucleus</location>
    </subcellularLocation>
</comment>